<proteinExistence type="inferred from homology"/>
<feature type="chain" id="PRO_0000362104" description="Kynurenine formamidase">
    <location>
        <begin position="1"/>
        <end position="213"/>
    </location>
</feature>
<feature type="active site" description="Proton donor/acceptor" evidence="1">
    <location>
        <position position="58"/>
    </location>
</feature>
<feature type="binding site" evidence="1">
    <location>
        <position position="18"/>
    </location>
    <ligand>
        <name>substrate</name>
    </ligand>
</feature>
<feature type="binding site" evidence="1">
    <location>
        <position position="48"/>
    </location>
    <ligand>
        <name>Zn(2+)</name>
        <dbReference type="ChEBI" id="CHEBI:29105"/>
        <label>1</label>
    </ligand>
</feature>
<feature type="binding site" evidence="1">
    <location>
        <position position="52"/>
    </location>
    <ligand>
        <name>Zn(2+)</name>
        <dbReference type="ChEBI" id="CHEBI:29105"/>
        <label>1</label>
    </ligand>
</feature>
<feature type="binding site" evidence="1">
    <location>
        <position position="54"/>
    </location>
    <ligand>
        <name>Zn(2+)</name>
        <dbReference type="ChEBI" id="CHEBI:29105"/>
        <label>1</label>
    </ligand>
</feature>
<feature type="binding site" evidence="1">
    <location>
        <position position="54"/>
    </location>
    <ligand>
        <name>Zn(2+)</name>
        <dbReference type="ChEBI" id="CHEBI:29105"/>
        <label>2</label>
    </ligand>
</feature>
<feature type="binding site" evidence="1">
    <location>
        <position position="160"/>
    </location>
    <ligand>
        <name>Zn(2+)</name>
        <dbReference type="ChEBI" id="CHEBI:29105"/>
        <label>2</label>
    </ligand>
</feature>
<feature type="binding site" evidence="1">
    <location>
        <position position="172"/>
    </location>
    <ligand>
        <name>Zn(2+)</name>
        <dbReference type="ChEBI" id="CHEBI:29105"/>
        <label>1</label>
    </ligand>
</feature>
<feature type="binding site" evidence="1">
    <location>
        <position position="172"/>
    </location>
    <ligand>
        <name>Zn(2+)</name>
        <dbReference type="ChEBI" id="CHEBI:29105"/>
        <label>2</label>
    </ligand>
</feature>
<sequence>MDTLWDISPPVSPATPVWPGDTPVSVERVWRMEAGSPVNVARLTLSPHTGAHCDAPLHYDADGAPIGAVPLDTYLGPCRVIHCIGAAPVVRPADIEAALDGVPPRVLLRTYARASVEQWDSGFCAVAPETVDLLAAHGVKLIGIDTPSLDPQESKTMDAHHRVRAHRMAILEGIVLDDVPPGDYELIALPLKFATLDASPVRAVLRALPGHSS</sequence>
<accession>Q0BCE2</accession>
<reference key="1">
    <citation type="submission" date="2006-08" db="EMBL/GenBank/DDBJ databases">
        <title>Complete sequence of chromosome 1 of Burkholderia cepacia AMMD.</title>
        <authorList>
            <person name="Copeland A."/>
            <person name="Lucas S."/>
            <person name="Lapidus A."/>
            <person name="Barry K."/>
            <person name="Detter J.C."/>
            <person name="Glavina del Rio T."/>
            <person name="Hammon N."/>
            <person name="Israni S."/>
            <person name="Pitluck S."/>
            <person name="Bruce D."/>
            <person name="Chain P."/>
            <person name="Malfatti S."/>
            <person name="Shin M."/>
            <person name="Vergez L."/>
            <person name="Schmutz J."/>
            <person name="Larimer F."/>
            <person name="Land M."/>
            <person name="Hauser L."/>
            <person name="Kyrpides N."/>
            <person name="Kim E."/>
            <person name="Parke J."/>
            <person name="Coenye T."/>
            <person name="Konstantinidis K."/>
            <person name="Ramette A."/>
            <person name="Tiedje J."/>
            <person name="Richardson P."/>
        </authorList>
    </citation>
    <scope>NUCLEOTIDE SEQUENCE [LARGE SCALE GENOMIC DNA]</scope>
    <source>
        <strain>ATCC BAA-244 / DSM 16087 / CCUG 44356 / LMG 19182 / AMMD</strain>
    </source>
</reference>
<name>KYNB_BURCM</name>
<comment type="function">
    <text evidence="1">Catalyzes the hydrolysis of N-formyl-L-kynurenine to L-kynurenine, the second step in the kynurenine pathway of tryptophan degradation.</text>
</comment>
<comment type="catalytic activity">
    <reaction evidence="1">
        <text>N-formyl-L-kynurenine + H2O = L-kynurenine + formate + H(+)</text>
        <dbReference type="Rhea" id="RHEA:13009"/>
        <dbReference type="ChEBI" id="CHEBI:15377"/>
        <dbReference type="ChEBI" id="CHEBI:15378"/>
        <dbReference type="ChEBI" id="CHEBI:15740"/>
        <dbReference type="ChEBI" id="CHEBI:57959"/>
        <dbReference type="ChEBI" id="CHEBI:58629"/>
        <dbReference type="EC" id="3.5.1.9"/>
    </reaction>
</comment>
<comment type="cofactor">
    <cofactor evidence="1">
        <name>Zn(2+)</name>
        <dbReference type="ChEBI" id="CHEBI:29105"/>
    </cofactor>
    <text evidence="1">Binds 2 zinc ions per subunit.</text>
</comment>
<comment type="pathway">
    <text evidence="1">Amino-acid degradation; L-tryptophan degradation via kynurenine pathway; L-kynurenine from L-tryptophan: step 2/2.</text>
</comment>
<comment type="subunit">
    <text evidence="1">Homodimer.</text>
</comment>
<comment type="similarity">
    <text evidence="1">Belongs to the Cyclase 1 superfamily. KynB family.</text>
</comment>
<dbReference type="EC" id="3.5.1.9" evidence="1"/>
<dbReference type="EMBL" id="CP000440">
    <property type="protein sequence ID" value="ABI88181.1"/>
    <property type="molecule type" value="Genomic_DNA"/>
</dbReference>
<dbReference type="RefSeq" id="WP_011657769.1">
    <property type="nucleotide sequence ID" value="NZ_CP009798.1"/>
</dbReference>
<dbReference type="SMR" id="Q0BCE2"/>
<dbReference type="GeneID" id="93085173"/>
<dbReference type="KEGG" id="bam:Bamb_2625"/>
<dbReference type="PATRIC" id="fig|339670.21.peg.2276"/>
<dbReference type="eggNOG" id="COG1878">
    <property type="taxonomic scope" value="Bacteria"/>
</dbReference>
<dbReference type="UniPathway" id="UPA00333">
    <property type="reaction ID" value="UER00454"/>
</dbReference>
<dbReference type="Proteomes" id="UP000000662">
    <property type="component" value="Chromosome 1"/>
</dbReference>
<dbReference type="GO" id="GO:0004061">
    <property type="term" value="F:arylformamidase activity"/>
    <property type="evidence" value="ECO:0000250"/>
    <property type="project" value="UniProtKB"/>
</dbReference>
<dbReference type="GO" id="GO:0004328">
    <property type="term" value="F:formamidase activity"/>
    <property type="evidence" value="ECO:0007669"/>
    <property type="project" value="InterPro"/>
</dbReference>
<dbReference type="GO" id="GO:0008270">
    <property type="term" value="F:zinc ion binding"/>
    <property type="evidence" value="ECO:0007669"/>
    <property type="project" value="UniProtKB-UniRule"/>
</dbReference>
<dbReference type="GO" id="GO:0043420">
    <property type="term" value="P:anthranilate metabolic process"/>
    <property type="evidence" value="ECO:0000250"/>
    <property type="project" value="UniProtKB"/>
</dbReference>
<dbReference type="GO" id="GO:0019441">
    <property type="term" value="P:L-tryptophan catabolic process to kynurenine"/>
    <property type="evidence" value="ECO:0000250"/>
    <property type="project" value="UniProtKB"/>
</dbReference>
<dbReference type="FunFam" id="3.50.30.50:FF:000001">
    <property type="entry name" value="Kynurenine formamidase"/>
    <property type="match status" value="1"/>
</dbReference>
<dbReference type="Gene3D" id="3.50.30.50">
    <property type="entry name" value="Putative cyclase"/>
    <property type="match status" value="1"/>
</dbReference>
<dbReference type="HAMAP" id="MF_01969">
    <property type="entry name" value="KynB"/>
    <property type="match status" value="1"/>
</dbReference>
<dbReference type="InterPro" id="IPR007325">
    <property type="entry name" value="KFase/CYL"/>
</dbReference>
<dbReference type="InterPro" id="IPR037175">
    <property type="entry name" value="KFase_sf"/>
</dbReference>
<dbReference type="InterPro" id="IPR017484">
    <property type="entry name" value="Kynurenine_formamidase_bac"/>
</dbReference>
<dbReference type="NCBIfam" id="TIGR03035">
    <property type="entry name" value="trp_arylform"/>
    <property type="match status" value="1"/>
</dbReference>
<dbReference type="PANTHER" id="PTHR31118">
    <property type="entry name" value="CYCLASE-LIKE PROTEIN 2"/>
    <property type="match status" value="1"/>
</dbReference>
<dbReference type="PANTHER" id="PTHR31118:SF32">
    <property type="entry name" value="KYNURENINE FORMAMIDASE"/>
    <property type="match status" value="1"/>
</dbReference>
<dbReference type="Pfam" id="PF04199">
    <property type="entry name" value="Cyclase"/>
    <property type="match status" value="1"/>
</dbReference>
<dbReference type="SUPFAM" id="SSF102198">
    <property type="entry name" value="Putative cyclase"/>
    <property type="match status" value="1"/>
</dbReference>
<gene>
    <name evidence="1" type="primary">kynB</name>
    <name type="ordered locus">Bamb_2625</name>
</gene>
<organism>
    <name type="scientific">Burkholderia ambifaria (strain ATCC BAA-244 / DSM 16087 / CCUG 44356 / LMG 19182 / AMMD)</name>
    <name type="common">Burkholderia cepacia (strain AMMD)</name>
    <dbReference type="NCBI Taxonomy" id="339670"/>
    <lineage>
        <taxon>Bacteria</taxon>
        <taxon>Pseudomonadati</taxon>
        <taxon>Pseudomonadota</taxon>
        <taxon>Betaproteobacteria</taxon>
        <taxon>Burkholderiales</taxon>
        <taxon>Burkholderiaceae</taxon>
        <taxon>Burkholderia</taxon>
        <taxon>Burkholderia cepacia complex</taxon>
    </lineage>
</organism>
<evidence type="ECO:0000255" key="1">
    <source>
        <dbReference type="HAMAP-Rule" id="MF_01969"/>
    </source>
</evidence>
<protein>
    <recommendedName>
        <fullName evidence="1">Kynurenine formamidase</fullName>
        <shortName evidence="1">KFA</shortName>
        <shortName evidence="1">KFase</shortName>
        <ecNumber evidence="1">3.5.1.9</ecNumber>
    </recommendedName>
    <alternativeName>
        <fullName evidence="1">Arylformamidase</fullName>
    </alternativeName>
    <alternativeName>
        <fullName evidence="1">N-formylkynurenine formamidase</fullName>
        <shortName evidence="1">FKF</shortName>
    </alternativeName>
</protein>
<keyword id="KW-0378">Hydrolase</keyword>
<keyword id="KW-0479">Metal-binding</keyword>
<keyword id="KW-0823">Tryptophan catabolism</keyword>
<keyword id="KW-0862">Zinc</keyword>